<name>MYB96_ARATH</name>
<gene>
    <name evidence="14" type="primary">MYB96</name>
    <name evidence="17" type="synonym">MYBCOV1</name>
    <name evidence="16" type="ordered locus">At5g62470</name>
    <name evidence="18" type="ORF">K19B1.8</name>
</gene>
<keyword id="KW-0938">Abscisic acid signaling pathway</keyword>
<keyword id="KW-0010">Activator</keyword>
<keyword id="KW-0025">Alternative splicing</keyword>
<keyword id="KW-0238">DNA-binding</keyword>
<keyword id="KW-0539">Nucleus</keyword>
<keyword id="KW-0611">Plant defense</keyword>
<keyword id="KW-1185">Reference proteome</keyword>
<keyword id="KW-0677">Repeat</keyword>
<keyword id="KW-0346">Stress response</keyword>
<keyword id="KW-0804">Transcription</keyword>
<keyword id="KW-0805">Transcription regulation</keyword>
<accession>Q24JK1</accession>
<accession>Q6R036</accession>
<accession>Q9SPG0</accession>
<accession>Q9ZRY6</accession>
<sequence>MGRPPCCEKIGVKKGPWTPEEDIILVSYIQEHGPGNWRSVPTHTGLRRCSKSCRLRWTNYLRPGIKRGNFTEHEEKTIVHLQALLGNRWAAIASYLPERTDNDIKNYWNTHLKKKLKKINESGEEDNDGVSSSNTSSQKNHQSTNKGQWERRLQTDINMAKQALCEALSLDKPSSTLSSSSSLPTPVITQQNIRNFSSALLDRCYDPSSSSSSTTTTTTSNTTNPYPSGVYASSAENIARLLQDFMKDTPKALTLSSSSPVSETGPLTAAVSEEGGEGFEQSFFSFNSMDETQNLTQETSFFHDQVIKPEITMDQDHGLISQGSLSLFEKWLFDEQSHEMVGMALAGQEGMF</sequence>
<feature type="chain" id="PRO_0000442919" description="Transcription factor MYB96">
    <location>
        <begin position="1"/>
        <end position="352"/>
    </location>
</feature>
<feature type="domain" description="HTH myb-type 1" evidence="1">
    <location>
        <begin position="9"/>
        <end position="65"/>
    </location>
</feature>
<feature type="domain" description="HTH myb-type 2" evidence="1">
    <location>
        <begin position="66"/>
        <end position="116"/>
    </location>
</feature>
<feature type="DNA-binding region" description="H-T-H motif" evidence="1">
    <location>
        <begin position="37"/>
        <end position="61"/>
    </location>
</feature>
<feature type="DNA-binding region" description="H-T-H motif" evidence="1">
    <location>
        <begin position="89"/>
        <end position="112"/>
    </location>
</feature>
<feature type="region of interest" description="Disordered" evidence="2">
    <location>
        <begin position="119"/>
        <end position="148"/>
    </location>
</feature>
<feature type="region of interest" description="Disordered" evidence="2">
    <location>
        <begin position="207"/>
        <end position="228"/>
    </location>
</feature>
<feature type="compositionally biased region" description="Polar residues" evidence="2">
    <location>
        <begin position="129"/>
        <end position="147"/>
    </location>
</feature>
<feature type="compositionally biased region" description="Low complexity" evidence="2">
    <location>
        <begin position="208"/>
        <end position="224"/>
    </location>
</feature>
<feature type="splice variant" id="VSP_059283" description="In isoform 2.">
    <location>
        <position position="47"/>
    </location>
</feature>
<feature type="sequence conflict" description="In Ref. 7; CAA09728." evidence="15" ref="7">
    <original>N</original>
    <variation>S</variation>
    <location>
        <position position="134"/>
    </location>
</feature>
<feature type="sequence conflict" description="In Ref. 2; AAS10115." evidence="15" ref="2">
    <original>I</original>
    <variation>V</variation>
    <location>
        <position position="307"/>
    </location>
</feature>
<proteinExistence type="evidence at protein level"/>
<comment type="function">
    <text evidence="4 5 6 7 8 9 10 11 12 13">Transcription activator involved in the activation of cuticular wax biosynthesis under drought stress. Binds directly to DNA consensus sequences found in the promoters of genes encoding very-long-chain fatty acid-condensing enzymes involved in cuticular wax biosynthesis (PubMed:21398568). Functions together with MYB94 in the activation of cuticular wax biosynthesis (PubMed:27577115). Involved in drought stress response through abscisic acid (ABA) signaling. Mediates ABA signals that enhance plant resistance to drought by reducing stomatal opening. Mediates ABA-auxin cross-talk to regulate lateral root growth under drought stress conditions (PubMed:19625633). Involved in the regulation of ABA biosynthesis and ABA-dependent seed dormancy state. Binds to the promoters of NCED2 and NCED6, which are enzymes catalyzing the first step of ABA biosynthesis (PubMed:25616734). Regulates seed germination by controlling the expression of ABI4, a repressor of lipid breakdown during seed germination (PubMed:25869652). Binds to the promoter of LTP3 and transactivates LTP3 gene in response to drought stress and freezing (PubMed:23404903). Involved in cold stress response. Binds directly to the promoters of heptahelical protein (HHP) genes in response to cold stress. HHPs modulate the expression of SCRM/ICE1, SCRM2/ICE2 and CAMTA3, which are upstream regulators of cold-responsive C-repeat-binding factors (CBFs) (PubMed:25912720). Involved in defense responses against the bacterial pathogen Pseudomonas syringae. May act as a molecular link that mediates cross-talks between ABA and salicylate (PubMed:20149112). Involved in a crosstalk between the circadian clock and ABA signaling. Binds directly to the promoter of APRR1/TOC1 to activate its expression (PubMed:26725725). Promotes ABA signaling (PubMed:30979883). Recruits the histone deacetylase HDA15 to the promoters of a subset of Rho GTPase (ROP) genes, which repress ABA signaling at the early stages of signal transduction (PubMed:30979883). HDA15 represses ROP expression by removing acetyl groups of histone H3 and H4 from the cognate regions, particularly in the presence of ABA (PubMed:30979883).</text>
</comment>
<comment type="subunit">
    <text evidence="13">Interacts with HDA15.</text>
</comment>
<comment type="subcellular location">
    <subcellularLocation>
        <location evidence="1 4">Nucleus</location>
    </subcellularLocation>
</comment>
<comment type="alternative products">
    <event type="alternative splicing"/>
    <isoform>
        <id>Q24JK1-1</id>
        <name>1</name>
        <sequence type="displayed"/>
    </isoform>
    <isoform>
        <id>Q24JK1-2</id>
        <name>2</name>
        <sequence type="described" ref="VSP_059283"/>
    </isoform>
</comment>
<comment type="tissue specificity">
    <text evidence="4">Expressed in leaves, flowers, guard cells and lateral root primordia.</text>
</comment>
<comment type="induction">
    <text evidence="3 4 10">Induced by drought stress, salt stress and abscisic acid (ABA) (PubMed:19625633). Induced by infection with the cauliflower mosaic virus (CaMV) (PubMed:10226370). Induced by cold stress (PubMed:25912720).</text>
</comment>
<comment type="disruption phenotype">
    <text evidence="4">No visible phenotype under normal growth conditions, but mutant plants exhibit increased susceptibility to drought stress.</text>
</comment>
<comment type="miscellaneous">
    <text evidence="4 5 6">Plants overexpressing MYB96 exhibit a dwarf growth, altered leaf morphology, reduced lateral roots, and enhanced drought resistance (PubMed:19625633). The gain-of-function mutant myb96-1D (activation tagging) plants exhibit deposition of epicuticuar wax crystals on leaf surface (PubMed:21398568). The gain-of-function mutant myb96-1D (activation tagging) plants accumulate high levels of anthocyanins and salicylate (SA), express pathogenesis-related (PR) genes constitutively, and exhibit enhanced resistance to Pseudomonas syringae infection (PubMed:20149112).</text>
</comment>
<organism>
    <name type="scientific">Arabidopsis thaliana</name>
    <name type="common">Mouse-ear cress</name>
    <dbReference type="NCBI Taxonomy" id="3702"/>
    <lineage>
        <taxon>Eukaryota</taxon>
        <taxon>Viridiplantae</taxon>
        <taxon>Streptophyta</taxon>
        <taxon>Embryophyta</taxon>
        <taxon>Tracheophyta</taxon>
        <taxon>Spermatophyta</taxon>
        <taxon>Magnoliopsida</taxon>
        <taxon>eudicotyledons</taxon>
        <taxon>Gunneridae</taxon>
        <taxon>Pentapetalae</taxon>
        <taxon>rosids</taxon>
        <taxon>malvids</taxon>
        <taxon>Brassicales</taxon>
        <taxon>Brassicaceae</taxon>
        <taxon>Camelineae</taxon>
        <taxon>Arabidopsis</taxon>
    </lineage>
</organism>
<evidence type="ECO:0000255" key="1">
    <source>
        <dbReference type="PROSITE-ProRule" id="PRU00625"/>
    </source>
</evidence>
<evidence type="ECO:0000256" key="2">
    <source>
        <dbReference type="SAM" id="MobiDB-lite"/>
    </source>
</evidence>
<evidence type="ECO:0000269" key="3">
    <source>
    </source>
</evidence>
<evidence type="ECO:0000269" key="4">
    <source>
    </source>
</evidence>
<evidence type="ECO:0000269" key="5">
    <source>
    </source>
</evidence>
<evidence type="ECO:0000269" key="6">
    <source>
    </source>
</evidence>
<evidence type="ECO:0000269" key="7">
    <source>
    </source>
</evidence>
<evidence type="ECO:0000269" key="8">
    <source>
    </source>
</evidence>
<evidence type="ECO:0000269" key="9">
    <source>
    </source>
</evidence>
<evidence type="ECO:0000269" key="10">
    <source>
    </source>
</evidence>
<evidence type="ECO:0000269" key="11">
    <source>
    </source>
</evidence>
<evidence type="ECO:0000269" key="12">
    <source>
    </source>
</evidence>
<evidence type="ECO:0000269" key="13">
    <source>
    </source>
</evidence>
<evidence type="ECO:0000303" key="14">
    <source>
    </source>
</evidence>
<evidence type="ECO:0000305" key="15"/>
<evidence type="ECO:0000312" key="16">
    <source>
        <dbReference type="Araport" id="AT5G62470"/>
    </source>
</evidence>
<evidence type="ECO:0000312" key="17">
    <source>
        <dbReference type="EMBL" id="AED97611.1"/>
    </source>
</evidence>
<evidence type="ECO:0000312" key="18">
    <source>
        <dbReference type="EMBL" id="BAB11497.1"/>
    </source>
</evidence>
<reference key="1">
    <citation type="journal article" date="2001" name="Curr. Opin. Plant Biol.">
        <title>The R2R3-MYB gene family in Arabidopsis thaliana.</title>
        <authorList>
            <person name="Stracke R."/>
            <person name="Werber M."/>
            <person name="Weisshaar B."/>
        </authorList>
    </citation>
    <scope>NUCLEOTIDE SEQUENCE [MRNA] (ISOFORM 2)</scope>
    <scope>GENE FAMILY</scope>
    <scope>NOMENCLATURE</scope>
</reference>
<reference key="2">
    <citation type="submission" date="2004-01" db="EMBL/GenBank/DDBJ databases">
        <title>The MYB transcription factor family in Arabidopsis: A genome-wide cloning and expression pattern Analysis.</title>
        <authorList>
            <person name="Qu L."/>
            <person name="Gu H."/>
        </authorList>
    </citation>
    <scope>NUCLEOTIDE SEQUENCE [MRNA] (ISOFORM 1)</scope>
</reference>
<reference key="3">
    <citation type="journal article" date="1998" name="DNA Res.">
        <title>Structural analysis of Arabidopsis thaliana chromosome 5. VII. Sequence features of the regions of 1,013,767 bp covered by sixteen physically assigned P1 and TAC clones.</title>
        <authorList>
            <person name="Nakamura Y."/>
            <person name="Sato S."/>
            <person name="Asamizu E."/>
            <person name="Kaneko T."/>
            <person name="Kotani H."/>
            <person name="Miyajima N."/>
            <person name="Tabata S."/>
        </authorList>
    </citation>
    <scope>NUCLEOTIDE SEQUENCE [LARGE SCALE GENOMIC DNA]</scope>
    <source>
        <strain>cv. Columbia</strain>
    </source>
</reference>
<reference key="4">
    <citation type="journal article" date="2017" name="Plant J.">
        <title>Araport11: a complete reannotation of the Arabidopsis thaliana reference genome.</title>
        <authorList>
            <person name="Cheng C.Y."/>
            <person name="Krishnakumar V."/>
            <person name="Chan A.P."/>
            <person name="Thibaud-Nissen F."/>
            <person name="Schobel S."/>
            <person name="Town C.D."/>
        </authorList>
    </citation>
    <scope>GENOME REANNOTATION</scope>
    <source>
        <strain>cv. Columbia</strain>
    </source>
</reference>
<reference key="5">
    <citation type="submission" date="2006-03" db="EMBL/GenBank/DDBJ databases">
        <title>Arabidopsis ORF clones.</title>
        <authorList>
            <person name="Shinn P."/>
            <person name="Chen H."/>
            <person name="Kim C.J."/>
            <person name="Ecker J.R."/>
        </authorList>
    </citation>
    <scope>NUCLEOTIDE SEQUENCE [LARGE SCALE MRNA] (ISOFORM 1)</scope>
    <source>
        <strain>cv. Columbia</strain>
    </source>
</reference>
<reference key="6">
    <citation type="submission" date="2006-07" db="EMBL/GenBank/DDBJ databases">
        <title>Large-scale analysis of RIKEN Arabidopsis full-length (RAFL) cDNAs.</title>
        <authorList>
            <person name="Totoki Y."/>
            <person name="Seki M."/>
            <person name="Ishida J."/>
            <person name="Nakajima M."/>
            <person name="Enju A."/>
            <person name="Kamiya A."/>
            <person name="Narusaka M."/>
            <person name="Shin-i T."/>
            <person name="Nakagawa M."/>
            <person name="Sakamoto N."/>
            <person name="Oishi K."/>
            <person name="Kohara Y."/>
            <person name="Kobayashi M."/>
            <person name="Toyoda A."/>
            <person name="Sakaki Y."/>
            <person name="Sakurai T."/>
            <person name="Iida K."/>
            <person name="Akiyama K."/>
            <person name="Satou M."/>
            <person name="Toyoda T."/>
            <person name="Konagaya A."/>
            <person name="Carninci P."/>
            <person name="Kawai J."/>
            <person name="Hayashizaki Y."/>
            <person name="Shinozaki K."/>
        </authorList>
    </citation>
    <scope>NUCLEOTIDE SEQUENCE [LARGE SCALE MRNA] (ISOFORM 1)</scope>
    <source>
        <strain>cv. Columbia</strain>
    </source>
</reference>
<reference key="7">
    <citation type="journal article" date="1999" name="Mol. Plant Microbe Interact.">
        <title>Altered patterns of gene expression in Arabidopsis elicited by cauliflower mosaic virus (CaMV) infection and by a CaMV gene VI transgene.</title>
        <authorList>
            <person name="Geri C.E."/>
            <person name="Cecchini E."/>
            <person name="Giannakou M.E."/>
            <person name="Covey S.N."/>
            <person name="Milner J.J."/>
        </authorList>
    </citation>
    <scope>NUCLEOTIDE SEQUENCE [MRNA] OF 10-352 (ISOFORM 1)</scope>
    <scope>INDUCTION BY THE CAULIFLOWER MOSAIC VIRUS</scope>
</reference>
<reference key="8">
    <citation type="journal article" date="2009" name="Plant Physiol.">
        <title>The MYB96 transcription factor mediates abscisic acid signaling during drought stress response in Arabidopsis.</title>
        <authorList>
            <person name="Seo P.J."/>
            <person name="Xiang F."/>
            <person name="Qiao M."/>
            <person name="Park J.Y."/>
            <person name="Lee Y.N."/>
            <person name="Kim S.G."/>
            <person name="Lee Y.H."/>
            <person name="Park W.J."/>
            <person name="Park C.M."/>
        </authorList>
    </citation>
    <scope>FUNCTION</scope>
    <scope>SUBCELLULAR LOCATION</scope>
    <scope>TISSUE SPECIFICITY</scope>
    <scope>INDUCTION</scope>
    <scope>DISRUPTION PHENOTYPE</scope>
</reference>
<reference key="9">
    <citation type="journal article" date="2010" name="New Phytol.">
        <title>MYB96-mediated abscisic acid signals induce pathogen resistance response by promoting salicylic acid biosynthesis in Arabidopsis.</title>
        <authorList>
            <person name="Seo P.J."/>
            <person name="Park C.M."/>
        </authorList>
    </citation>
    <scope>FUNCTION</scope>
</reference>
<reference key="10">
    <citation type="journal article" date="2011" name="Plant Cell">
        <title>The MYB96 transcription factor regulates cuticular wax biosynthesis under drought conditions in Arabidopsis.</title>
        <authorList>
            <person name="Seo P.J."/>
            <person name="Lee S.B."/>
            <person name="Suh M.C."/>
            <person name="Park M.J."/>
            <person name="Go Y.S."/>
            <person name="Park C.M."/>
        </authorList>
    </citation>
    <scope>FUNCTION</scope>
</reference>
<reference key="11">
    <citation type="journal article" date="2013" name="J. Exp. Bot.">
        <title>Lipid transfer protein 3 as a target of MYB96 mediates freezing and drought stress in Arabidopsis.</title>
        <authorList>
            <person name="Guo L."/>
            <person name="Yang H."/>
            <person name="Zhang X."/>
            <person name="Yang S."/>
        </authorList>
    </citation>
    <scope>FUNCTION</scope>
</reference>
<reference key="12">
    <citation type="journal article" date="2015" name="Plant J.">
        <title>The MYB96-HHP module integrates cold and abscisic acid signaling to activate the CBF-COR pathway in Arabidopsis.</title>
        <authorList>
            <person name="Lee H.G."/>
            <person name="Seo P.J."/>
        </authorList>
    </citation>
    <scope>FUNCTION</scope>
    <scope>INDUCTION</scope>
</reference>
<reference key="13">
    <citation type="journal article" date="2015" name="Plant Mol. Biol.">
        <title>The Arabidopsis MYB96 transcription factor plays a role in seed dormancy.</title>
        <authorList>
            <person name="Lee H.G."/>
            <person name="Lee K."/>
            <person name="Seo P.J."/>
        </authorList>
    </citation>
    <scope>FUNCTION</scope>
</reference>
<reference key="14">
    <citation type="journal article" date="2015" name="Plant Physiol.">
        <title>The Arabidopsis MYB96 transcription factor is a positive regulator of ABSCISIC ACID-INSENSITIVE4 in the control of seed germination.</title>
        <authorList>
            <person name="Lee K."/>
            <person name="Lee H.G."/>
            <person name="Yoon S."/>
            <person name="Kim H.U."/>
            <person name="Seo P.J."/>
        </authorList>
    </citation>
    <scope>FUNCTION</scope>
</reference>
<reference key="15">
    <citation type="journal article" date="2016" name="Plant Cell Physiol.">
        <title>MYB94 and MYB96 additively activate cuticular wax biosynthesis in Arabidopsis.</title>
        <authorList>
            <person name="Lee S.B."/>
            <person name="Kim H.U."/>
            <person name="Suh M.C."/>
        </authorList>
    </citation>
    <scope>FUNCTION</scope>
</reference>
<reference key="16">
    <citation type="journal article" date="2016" name="Sci. Rep.">
        <title>MYB96 shapes the circadian gating of ABA signaling in Arabidopsis.</title>
        <authorList>
            <person name="Lee H.G."/>
            <person name="Mas P."/>
            <person name="Seo P.J."/>
        </authorList>
    </citation>
    <scope>FUNCTION</scope>
</reference>
<reference key="17">
    <citation type="journal article" date="2019" name="Nat. Commun.">
        <title>MYB96 recruits the HDA15 protein to suppress negative regulators of ABA signaling in Arabidopsis.</title>
        <authorList>
            <person name="Lee H.G."/>
            <person name="Seo P.J."/>
        </authorList>
    </citation>
    <scope>FUNCTION</scope>
    <scope>INTERACTION WITH HDA15</scope>
</reference>
<protein>
    <recommendedName>
        <fullName evidence="14">Transcription factor MYB96</fullName>
    </recommendedName>
    <alternativeName>
        <fullName evidence="14">Myb-related protein 96</fullName>
        <shortName evidence="14">AtMYB96</shortName>
    </alternativeName>
</protein>
<dbReference type="EMBL" id="AF176001">
    <property type="protein sequence ID" value="AAD53106.1"/>
    <property type="molecule type" value="mRNA"/>
</dbReference>
<dbReference type="EMBL" id="AY519645">
    <property type="protein sequence ID" value="AAS10115.1"/>
    <property type="molecule type" value="mRNA"/>
</dbReference>
<dbReference type="EMBL" id="AB015469">
    <property type="protein sequence ID" value="BAB11497.1"/>
    <property type="molecule type" value="Genomic_DNA"/>
</dbReference>
<dbReference type="EMBL" id="CP002688">
    <property type="protein sequence ID" value="AED97610.1"/>
    <property type="molecule type" value="Genomic_DNA"/>
</dbReference>
<dbReference type="EMBL" id="CP002688">
    <property type="protein sequence ID" value="AED97611.1"/>
    <property type="molecule type" value="Genomic_DNA"/>
</dbReference>
<dbReference type="EMBL" id="BT024888">
    <property type="protein sequence ID" value="ABD85159.1"/>
    <property type="molecule type" value="mRNA"/>
</dbReference>
<dbReference type="EMBL" id="AK228977">
    <property type="protein sequence ID" value="BAF00865.1"/>
    <property type="molecule type" value="mRNA"/>
</dbReference>
<dbReference type="EMBL" id="AJ011669">
    <property type="protein sequence ID" value="CAA09728.1"/>
    <property type="molecule type" value="mRNA"/>
</dbReference>
<dbReference type="PIR" id="T52590">
    <property type="entry name" value="T52590"/>
</dbReference>
<dbReference type="RefSeq" id="NP_201053.2">
    <molecule id="Q24JK1-1"/>
    <property type="nucleotide sequence ID" value="NM_125641.4"/>
</dbReference>
<dbReference type="RefSeq" id="NP_851248.1">
    <molecule id="Q24JK1-2"/>
    <property type="nucleotide sequence ID" value="NM_180917.1"/>
</dbReference>
<dbReference type="SMR" id="Q24JK1"/>
<dbReference type="FunCoup" id="Q24JK1">
    <property type="interactions" value="26"/>
</dbReference>
<dbReference type="IntAct" id="Q24JK1">
    <property type="interactions" value="2"/>
</dbReference>
<dbReference type="STRING" id="3702.Q24JK1"/>
<dbReference type="PaxDb" id="3702-AT5G62470.2"/>
<dbReference type="ProteomicsDB" id="248914">
    <molecule id="Q24JK1-1"/>
</dbReference>
<dbReference type="EnsemblPlants" id="AT5G62470.1">
    <molecule id="Q24JK1-2"/>
    <property type="protein sequence ID" value="AT5G62470.1"/>
    <property type="gene ID" value="AT5G62470"/>
</dbReference>
<dbReference type="EnsemblPlants" id="AT5G62470.2">
    <molecule id="Q24JK1-1"/>
    <property type="protein sequence ID" value="AT5G62470.2"/>
    <property type="gene ID" value="AT5G62470"/>
</dbReference>
<dbReference type="GeneID" id="836367"/>
<dbReference type="Gramene" id="AT5G62470.1">
    <molecule id="Q24JK1-2"/>
    <property type="protein sequence ID" value="AT5G62470.1"/>
    <property type="gene ID" value="AT5G62470"/>
</dbReference>
<dbReference type="Gramene" id="AT5G62470.2">
    <molecule id="Q24JK1-1"/>
    <property type="protein sequence ID" value="AT5G62470.2"/>
    <property type="gene ID" value="AT5G62470"/>
</dbReference>
<dbReference type="KEGG" id="ath:AT5G62470"/>
<dbReference type="Araport" id="AT5G62470"/>
<dbReference type="TAIR" id="AT5G62470">
    <property type="gene designation" value="MYB96"/>
</dbReference>
<dbReference type="eggNOG" id="KOG0048">
    <property type="taxonomic scope" value="Eukaryota"/>
</dbReference>
<dbReference type="InParanoid" id="Q24JK1"/>
<dbReference type="OMA" id="FNSMEES"/>
<dbReference type="OrthoDB" id="2143914at2759"/>
<dbReference type="PhylomeDB" id="Q24JK1"/>
<dbReference type="PRO" id="PR:Q24JK1"/>
<dbReference type="Proteomes" id="UP000006548">
    <property type="component" value="Chromosome 5"/>
</dbReference>
<dbReference type="ExpressionAtlas" id="Q24JK1">
    <property type="expression patterns" value="baseline and differential"/>
</dbReference>
<dbReference type="GO" id="GO:0005634">
    <property type="term" value="C:nucleus"/>
    <property type="evidence" value="ECO:0000314"/>
    <property type="project" value="TAIR"/>
</dbReference>
<dbReference type="GO" id="GO:0003700">
    <property type="term" value="F:DNA-binding transcription factor activity"/>
    <property type="evidence" value="ECO:0000250"/>
    <property type="project" value="TAIR"/>
</dbReference>
<dbReference type="GO" id="GO:0043565">
    <property type="term" value="F:sequence-specific DNA binding"/>
    <property type="evidence" value="ECO:0000314"/>
    <property type="project" value="UniProtKB"/>
</dbReference>
<dbReference type="GO" id="GO:0009738">
    <property type="term" value="P:abscisic acid-activated signaling pathway"/>
    <property type="evidence" value="ECO:0007669"/>
    <property type="project" value="UniProtKB-KW"/>
</dbReference>
<dbReference type="GO" id="GO:0006952">
    <property type="term" value="P:defense response"/>
    <property type="evidence" value="ECO:0007669"/>
    <property type="project" value="UniProtKB-KW"/>
</dbReference>
<dbReference type="GO" id="GO:0009789">
    <property type="term" value="P:positive regulation of abscisic acid-activated signaling pathway"/>
    <property type="evidence" value="ECO:0000314"/>
    <property type="project" value="UniProtKB"/>
</dbReference>
<dbReference type="GO" id="GO:0045893">
    <property type="term" value="P:positive regulation of DNA-templated transcription"/>
    <property type="evidence" value="ECO:0000315"/>
    <property type="project" value="UniProtKB"/>
</dbReference>
<dbReference type="GO" id="GO:1904278">
    <property type="term" value="P:positive regulation of wax biosynthetic process"/>
    <property type="evidence" value="ECO:0000315"/>
    <property type="project" value="UniProtKB"/>
</dbReference>
<dbReference type="GO" id="GO:0010115">
    <property type="term" value="P:regulation of abscisic acid biosynthetic process"/>
    <property type="evidence" value="ECO:0000315"/>
    <property type="project" value="UniProtKB"/>
</dbReference>
<dbReference type="GO" id="GO:0009787">
    <property type="term" value="P:regulation of abscisic acid-activated signaling pathway"/>
    <property type="evidence" value="ECO:0000315"/>
    <property type="project" value="UniProtKB"/>
</dbReference>
<dbReference type="GO" id="GO:0006355">
    <property type="term" value="P:regulation of DNA-templated transcription"/>
    <property type="evidence" value="ECO:0000304"/>
    <property type="project" value="TAIR"/>
</dbReference>
<dbReference type="GO" id="GO:0010468">
    <property type="term" value="P:regulation of gene expression"/>
    <property type="evidence" value="ECO:0000315"/>
    <property type="project" value="TAIR"/>
</dbReference>
<dbReference type="GO" id="GO:2000033">
    <property type="term" value="P:regulation of seed dormancy process"/>
    <property type="evidence" value="ECO:0000315"/>
    <property type="project" value="UniProtKB"/>
</dbReference>
<dbReference type="GO" id="GO:0009409">
    <property type="term" value="P:response to cold"/>
    <property type="evidence" value="ECO:0000315"/>
    <property type="project" value="UniProtKB"/>
</dbReference>
<dbReference type="GO" id="GO:0009414">
    <property type="term" value="P:response to water deprivation"/>
    <property type="evidence" value="ECO:0000315"/>
    <property type="project" value="TAIR"/>
</dbReference>
<dbReference type="CDD" id="cd00167">
    <property type="entry name" value="SANT"/>
    <property type="match status" value="2"/>
</dbReference>
<dbReference type="FunFam" id="1.10.10.60:FF:000001">
    <property type="entry name" value="MYB-related transcription factor"/>
    <property type="match status" value="1"/>
</dbReference>
<dbReference type="FunFam" id="1.10.10.60:FF:000445">
    <property type="entry name" value="Transcription factor MYB96"/>
    <property type="match status" value="1"/>
</dbReference>
<dbReference type="Gene3D" id="1.10.10.60">
    <property type="entry name" value="Homeodomain-like"/>
    <property type="match status" value="2"/>
</dbReference>
<dbReference type="InterPro" id="IPR009057">
    <property type="entry name" value="Homeodomain-like_sf"/>
</dbReference>
<dbReference type="InterPro" id="IPR017930">
    <property type="entry name" value="Myb_dom"/>
</dbReference>
<dbReference type="InterPro" id="IPR015495">
    <property type="entry name" value="Myb_TF_plants"/>
</dbReference>
<dbReference type="InterPro" id="IPR001005">
    <property type="entry name" value="SANT/Myb"/>
</dbReference>
<dbReference type="PANTHER" id="PTHR10641">
    <property type="entry name" value="MYB FAMILY TRANSCRIPTION FACTOR"/>
    <property type="match status" value="1"/>
</dbReference>
<dbReference type="PANTHER" id="PTHR10641:SF1320">
    <property type="entry name" value="TRANSCRIPTION FACTOR MYB96"/>
    <property type="match status" value="1"/>
</dbReference>
<dbReference type="Pfam" id="PF00249">
    <property type="entry name" value="Myb_DNA-binding"/>
    <property type="match status" value="2"/>
</dbReference>
<dbReference type="SMART" id="SM00717">
    <property type="entry name" value="SANT"/>
    <property type="match status" value="2"/>
</dbReference>
<dbReference type="SUPFAM" id="SSF46689">
    <property type="entry name" value="Homeodomain-like"/>
    <property type="match status" value="1"/>
</dbReference>
<dbReference type="PROSITE" id="PS51294">
    <property type="entry name" value="HTH_MYB"/>
    <property type="match status" value="2"/>
</dbReference>